<keyword id="KW-0029">Amino-acid transport</keyword>
<keyword id="KW-0997">Cell inner membrane</keyword>
<keyword id="KW-1003">Cell membrane</keyword>
<keyword id="KW-0472">Membrane</keyword>
<keyword id="KW-1185">Reference proteome</keyword>
<keyword id="KW-0812">Transmembrane</keyword>
<keyword id="KW-1133">Transmembrane helix</keyword>
<keyword id="KW-0813">Transport</keyword>
<reference key="1">
    <citation type="journal article" date="1997" name="Science">
        <title>The complete genome sequence of Escherichia coli K-12.</title>
        <authorList>
            <person name="Blattner F.R."/>
            <person name="Plunkett G. III"/>
            <person name="Bloch C.A."/>
            <person name="Perna N.T."/>
            <person name="Burland V."/>
            <person name="Riley M."/>
            <person name="Collado-Vides J."/>
            <person name="Glasner J.D."/>
            <person name="Rode C.K."/>
            <person name="Mayhew G.F."/>
            <person name="Gregor J."/>
            <person name="Davis N.W."/>
            <person name="Kirkpatrick H.A."/>
            <person name="Goeden M.A."/>
            <person name="Rose D.J."/>
            <person name="Mau B."/>
            <person name="Shao Y."/>
        </authorList>
    </citation>
    <scope>NUCLEOTIDE SEQUENCE [LARGE SCALE GENOMIC DNA]</scope>
    <source>
        <strain>K12 / MG1655 / ATCC 47076</strain>
    </source>
</reference>
<reference key="2">
    <citation type="journal article" date="2006" name="Mol. Syst. Biol.">
        <title>Highly accurate genome sequences of Escherichia coli K-12 strains MG1655 and W3110.</title>
        <authorList>
            <person name="Hayashi K."/>
            <person name="Morooka N."/>
            <person name="Yamamoto Y."/>
            <person name="Fujita K."/>
            <person name="Isono K."/>
            <person name="Choi S."/>
            <person name="Ohtsubo E."/>
            <person name="Baba T."/>
            <person name="Wanner B.L."/>
            <person name="Mori H."/>
            <person name="Horiuchi T."/>
        </authorList>
    </citation>
    <scope>NUCLEOTIDE SEQUENCE [LARGE SCALE GENOMIC DNA]</scope>
    <source>
        <strain>K12 / W3110 / ATCC 27325 / DSM 5911</strain>
    </source>
</reference>
<reference key="3">
    <citation type="journal article" date="1989" name="Mol. Microbiol.">
        <title>Identification, molecular cloning and sequence analysis of a gene cluster encoding the class II fructose 1,6-bisphosphate aldolase, 3-phosphoglycerate kinase and a putative second glyceraldehyde 3-phosphate dehydrogenase of Escherichia coli.</title>
        <authorList>
            <person name="Alefounder P.R."/>
            <person name="Perham R.N."/>
        </authorList>
    </citation>
    <scope>NUCLEOTIDE SEQUENCE [GENOMIC DNA] OF 15-211</scope>
    <source>
        <strain>K12 / CS520</strain>
    </source>
</reference>
<reference key="4">
    <citation type="journal article" date="2004" name="J. Bacteriol.">
        <title>Evidence for an arginine exporter encoded by yggA (argO) that is regulated by the LysR-type transcriptional regulator ArgP in Escherichia coli.</title>
        <authorList>
            <person name="Nandineni M.R."/>
            <person name="Gowrishankar J."/>
        </authorList>
    </citation>
    <scope>FUNCTION</scope>
    <scope>CATALYTIC ACTIVITY</scope>
    <scope>INDUCTION</scope>
    <scope>DISRUPTION PHENOTYPE</scope>
    <source>
        <strain>K12</strain>
    </source>
</reference>
<reference key="5">
    <citation type="journal article" date="2005" name="Science">
        <title>Global topology analysis of the Escherichia coli inner membrane proteome.</title>
        <authorList>
            <person name="Daley D.O."/>
            <person name="Rapp M."/>
            <person name="Granseth E."/>
            <person name="Melen K."/>
            <person name="Drew D."/>
            <person name="von Heijne G."/>
        </authorList>
    </citation>
    <scope>TOPOLOGY [LARGE SCALE ANALYSIS]</scope>
    <scope>SUBCELLULAR LOCATION</scope>
    <source>
        <strain>K12 / MG1655 / ATCC 47076</strain>
    </source>
</reference>
<reference key="6">
    <citation type="journal article" date="2016" name="J. Bacteriol.">
        <title>The topology of the L-arginine exporter ArgO conforms to an Nin-Cout configuration in Escherichia coli: requirement for the cytoplasmic N-terminal domain, functional helical interactions, and an aspartate pair for ArgO function.</title>
        <authorList>
            <person name="Pathania A."/>
            <person name="Gupta A.K."/>
            <person name="Dubey S."/>
            <person name="Gopal B."/>
            <person name="Sardesai A.A."/>
        </authorList>
    </citation>
    <scope>SUBUNIT</scope>
    <scope>SUBCELLULAR LOCATION</scope>
    <scope>TOPOLOGY</scope>
    <scope>DOMAIN</scope>
    <scope>MUTAGENESIS OF GLY-20; GLN-22; ASP-47; ILE-51; ALA-60; ASP-128; VAL-132; SER-156 AND PHE-160</scope>
</reference>
<protein>
    <recommendedName>
        <fullName evidence="1 6">Arginine exporter protein ArgO</fullName>
    </recommendedName>
</protein>
<comment type="function">
    <text evidence="2">Involved in the export of arginine. Important to control the intracellular level of arginine and the correct balance between arginine and lysine. May also be involved in the export of canavanine (a plant-derived antimetabolite).</text>
</comment>
<comment type="catalytic activity">
    <reaction evidence="1 2">
        <text>L-arginine(in) = L-arginine(out)</text>
        <dbReference type="Rhea" id="RHEA:32143"/>
        <dbReference type="ChEBI" id="CHEBI:32682"/>
    </reaction>
    <physiologicalReaction direction="left-to-right" evidence="1 2">
        <dbReference type="Rhea" id="RHEA:32144"/>
    </physiologicalReaction>
</comment>
<comment type="subunit">
    <text evidence="4">Monomer.</text>
</comment>
<comment type="subcellular location">
    <subcellularLocation>
        <location evidence="1 3 4">Cell inner membrane</location>
        <topology evidence="1 4">Multi-pass membrane protein</topology>
    </subcellularLocation>
</comment>
<comment type="induction">
    <text evidence="2">Transcriptionally regulated by ArgP in response to the accumulation of intracellular arginine or canavanine. Lysine has a negative effect on the expression of argO.</text>
</comment>
<comment type="domain">
    <text evidence="4">The cytoplasmic N-terminal domain is important for ArgO function in vivo, but not the periplasmic C-terminal region. A pair of conserved aspartate residues, located near the opposing edges of the cytoplasmic membrane, may play a pivotal role in facilitating transmembrane arginine flux.</text>
</comment>
<comment type="disruption phenotype">
    <text evidence="2">Disruption mutant is supersensitive to the arginine analog canavanine.</text>
</comment>
<comment type="similarity">
    <text evidence="1 6">Belongs to the LysE/ArgO transporter (TC 2.A.75) family.</text>
</comment>
<evidence type="ECO:0000255" key="1">
    <source>
        <dbReference type="HAMAP-Rule" id="MF_01901"/>
    </source>
</evidence>
<evidence type="ECO:0000269" key="2">
    <source>
    </source>
</evidence>
<evidence type="ECO:0000269" key="3">
    <source>
    </source>
</evidence>
<evidence type="ECO:0000269" key="4">
    <source>
    </source>
</evidence>
<evidence type="ECO:0000303" key="5">
    <source>
    </source>
</evidence>
<evidence type="ECO:0000305" key="6"/>
<evidence type="ECO:0000305" key="7">
    <source>
    </source>
</evidence>
<sequence>MFSYYFQGLALGAAMILPLGPQNAFVMNQGIRRQYHIMIALLCAISDLVLICAGIFGGSALLMQSPWLLALVTWGGVAFLLWYGFGAFKTAMSSNIELASAEVMKQGRWKIIATMLAVTWLNPHVYLDTFVVLGSLGGQLDVEPKRWFALGTISASFLWFFGLALLAAWLAPRLRTAKAQRIINLVVGCVMWFIALQLARDGIAHAQALFS</sequence>
<organism>
    <name type="scientific">Escherichia coli (strain K12)</name>
    <dbReference type="NCBI Taxonomy" id="83333"/>
    <lineage>
        <taxon>Bacteria</taxon>
        <taxon>Pseudomonadati</taxon>
        <taxon>Pseudomonadota</taxon>
        <taxon>Gammaproteobacteria</taxon>
        <taxon>Enterobacterales</taxon>
        <taxon>Enterobacteriaceae</taxon>
        <taxon>Escherichia</taxon>
    </lineage>
</organism>
<feature type="chain" id="PRO_0000204158" description="Arginine exporter protein ArgO">
    <location>
        <begin position="1"/>
        <end position="211"/>
    </location>
</feature>
<feature type="topological domain" description="Cytoplasmic" evidence="4">
    <location>
        <begin position="1"/>
        <end position="38"/>
    </location>
</feature>
<feature type="transmembrane region" description="Helical" evidence="7">
    <location>
        <begin position="39"/>
        <end position="58"/>
    </location>
</feature>
<feature type="topological domain" description="Periplasmic" evidence="4">
    <location>
        <begin position="59"/>
        <end position="63"/>
    </location>
</feature>
<feature type="transmembrane region" description="Helical" evidence="7">
    <location>
        <begin position="64"/>
        <end position="91"/>
    </location>
</feature>
<feature type="topological domain" description="Cytoplasmic" evidence="4">
    <location>
        <begin position="92"/>
        <end position="102"/>
    </location>
</feature>
<feature type="transmembrane region" description="Helical" evidence="7">
    <location>
        <begin position="103"/>
        <end position="130"/>
    </location>
</feature>
<feature type="topological domain" description="Periplasmic" evidence="4">
    <location>
        <begin position="131"/>
        <end position="140"/>
    </location>
</feature>
<feature type="transmembrane region" description="Helical" evidence="7">
    <location>
        <begin position="141"/>
        <end position="170"/>
    </location>
</feature>
<feature type="topological domain" description="Cytoplasmic" evidence="4">
    <location>
        <begin position="171"/>
        <end position="173"/>
    </location>
</feature>
<feature type="transmembrane region" description="Helical" evidence="7">
    <location>
        <begin position="174"/>
        <end position="200"/>
    </location>
</feature>
<feature type="topological domain" description="Periplasmic" evidence="3 4">
    <location>
        <begin position="201"/>
        <end position="211"/>
    </location>
</feature>
<feature type="mutagenesis site" description="Loss of transport activity." evidence="4">
    <original>G</original>
    <variation>C</variation>
    <location>
        <position position="20"/>
    </location>
</feature>
<feature type="mutagenesis site" description="Loss of transport activity." evidence="4">
    <original>Q</original>
    <variation>R</variation>
    <location>
        <position position="22"/>
    </location>
</feature>
<feature type="mutagenesis site" description="Loss of transport activity." evidence="4">
    <original>D</original>
    <variation>A</variation>
    <location>
        <position position="47"/>
    </location>
</feature>
<feature type="mutagenesis site" description="Retains transport activity." evidence="4">
    <original>D</original>
    <variation>E</variation>
    <location>
        <position position="47"/>
    </location>
</feature>
<feature type="mutagenesis site" description="Retains transport activity." evidence="4">
    <original>I</original>
    <variation>T</variation>
    <location>
        <position position="51"/>
    </location>
</feature>
<feature type="mutagenesis site" description="Retains transport activity." evidence="4">
    <original>A</original>
    <variation>P</variation>
    <location>
        <position position="60"/>
    </location>
</feature>
<feature type="mutagenesis site" description="Loss of transport activity." evidence="4">
    <original>D</original>
    <variation>A</variation>
    <variation>Y</variation>
    <location>
        <position position="128"/>
    </location>
</feature>
<feature type="mutagenesis site" description="Retains transport activity." evidence="4">
    <original>D</original>
    <variation>E</variation>
    <location>
        <position position="128"/>
    </location>
</feature>
<feature type="mutagenesis site" description="Retains transport activity." evidence="4">
    <original>V</original>
    <variation>A</variation>
    <location>
        <position position="132"/>
    </location>
</feature>
<feature type="mutagenesis site" description="Loss of transport activity." evidence="4">
    <original>S</original>
    <variation>F</variation>
    <location>
        <position position="156"/>
    </location>
</feature>
<feature type="mutagenesis site" description="Loss of transport activity." evidence="4">
    <original>F</original>
    <variation>S</variation>
    <location>
        <position position="160"/>
    </location>
</feature>
<proteinExistence type="evidence at protein level"/>
<name>ARGO_ECOLI</name>
<dbReference type="EMBL" id="U28377">
    <property type="protein sequence ID" value="AAA69090.1"/>
    <property type="molecule type" value="Genomic_DNA"/>
</dbReference>
<dbReference type="EMBL" id="U00096">
    <property type="protein sequence ID" value="AAC75960.1"/>
    <property type="molecule type" value="Genomic_DNA"/>
</dbReference>
<dbReference type="EMBL" id="AP009048">
    <property type="protein sequence ID" value="BAE76987.1"/>
    <property type="molecule type" value="Genomic_DNA"/>
</dbReference>
<dbReference type="EMBL" id="X14436">
    <property type="protein sequence ID" value="CAA32607.1"/>
    <property type="molecule type" value="Genomic_DNA"/>
</dbReference>
<dbReference type="PIR" id="B65077">
    <property type="entry name" value="QQEC5A"/>
</dbReference>
<dbReference type="RefSeq" id="NP_417398.1">
    <property type="nucleotide sequence ID" value="NC_000913.3"/>
</dbReference>
<dbReference type="RefSeq" id="WP_000493352.1">
    <property type="nucleotide sequence ID" value="NZ_SSZK01000003.1"/>
</dbReference>
<dbReference type="BioGRID" id="4263380">
    <property type="interactions" value="12"/>
</dbReference>
<dbReference type="FunCoup" id="P11667">
    <property type="interactions" value="159"/>
</dbReference>
<dbReference type="STRING" id="511145.b2923"/>
<dbReference type="TCDB" id="2.A.75.1.2">
    <property type="family name" value="the l-lysine exporter (lyse) family"/>
</dbReference>
<dbReference type="PaxDb" id="511145-b2923"/>
<dbReference type="EnsemblBacteria" id="AAC75960">
    <property type="protein sequence ID" value="AAC75960"/>
    <property type="gene ID" value="b2923"/>
</dbReference>
<dbReference type="GeneID" id="947418"/>
<dbReference type="KEGG" id="ecj:JW2890"/>
<dbReference type="KEGG" id="eco:b2923"/>
<dbReference type="PATRIC" id="fig|1411691.4.peg.3809"/>
<dbReference type="EchoBASE" id="EB1148"/>
<dbReference type="eggNOG" id="COG1279">
    <property type="taxonomic scope" value="Bacteria"/>
</dbReference>
<dbReference type="HOGENOM" id="CLU_087840_0_1_6"/>
<dbReference type="InParanoid" id="P11667"/>
<dbReference type="OMA" id="HVFAVCL"/>
<dbReference type="OrthoDB" id="5638726at2"/>
<dbReference type="PhylomeDB" id="P11667"/>
<dbReference type="BioCyc" id="EcoCyc:YGGA-MONOMER"/>
<dbReference type="BioCyc" id="MetaCyc:YGGA-MONOMER"/>
<dbReference type="PRO" id="PR:P11667"/>
<dbReference type="Proteomes" id="UP000000625">
    <property type="component" value="Chromosome"/>
</dbReference>
<dbReference type="GO" id="GO:0005886">
    <property type="term" value="C:plasma membrane"/>
    <property type="evidence" value="ECO:0000314"/>
    <property type="project" value="EcoCyc"/>
</dbReference>
<dbReference type="GO" id="GO:0015171">
    <property type="term" value="F:amino acid transmembrane transporter activity"/>
    <property type="evidence" value="ECO:0000318"/>
    <property type="project" value="GO_Central"/>
</dbReference>
<dbReference type="GO" id="GO:0061459">
    <property type="term" value="F:L-arginine transmembrane transporter activity"/>
    <property type="evidence" value="ECO:0000315"/>
    <property type="project" value="EcoCyc"/>
</dbReference>
<dbReference type="GO" id="GO:0006865">
    <property type="term" value="P:amino acid transport"/>
    <property type="evidence" value="ECO:0000318"/>
    <property type="project" value="GO_Central"/>
</dbReference>
<dbReference type="GO" id="GO:1903826">
    <property type="term" value="P:L-arginine transmembrane transport"/>
    <property type="evidence" value="ECO:0000315"/>
    <property type="project" value="EcoCyc"/>
</dbReference>
<dbReference type="HAMAP" id="MF_01901">
    <property type="entry name" value="ArgO"/>
    <property type="match status" value="1"/>
</dbReference>
<dbReference type="InterPro" id="IPR023445">
    <property type="entry name" value="Arg_export_ArgO_enterobac"/>
</dbReference>
<dbReference type="InterPro" id="IPR001123">
    <property type="entry name" value="LeuE-type"/>
</dbReference>
<dbReference type="InterPro" id="IPR004777">
    <property type="entry name" value="Lys/arg_exporter"/>
</dbReference>
<dbReference type="NCBIfam" id="TIGR00948">
    <property type="entry name" value="2a75"/>
    <property type="match status" value="1"/>
</dbReference>
<dbReference type="NCBIfam" id="NF006801">
    <property type="entry name" value="PRK09304.1"/>
    <property type="match status" value="1"/>
</dbReference>
<dbReference type="PANTHER" id="PTHR30086">
    <property type="entry name" value="ARGININE EXPORTER PROTEIN ARGO"/>
    <property type="match status" value="1"/>
</dbReference>
<dbReference type="PANTHER" id="PTHR30086:SF20">
    <property type="entry name" value="ARGININE EXPORTER PROTEIN ARGO-RELATED"/>
    <property type="match status" value="1"/>
</dbReference>
<dbReference type="Pfam" id="PF01810">
    <property type="entry name" value="LysE"/>
    <property type="match status" value="1"/>
</dbReference>
<gene>
    <name evidence="1 5" type="primary">argO</name>
    <name type="synonym">yggA</name>
    <name type="ordered locus">b2923</name>
    <name type="ordered locus">JW2890</name>
</gene>
<accession>P11667</accession>
<accession>Q2M9R9</accession>